<evidence type="ECO:0000255" key="1"/>
<evidence type="ECO:0000269" key="2">
    <source>
    </source>
</evidence>
<evidence type="ECO:0000269" key="3">
    <source>
    </source>
</evidence>
<evidence type="ECO:0000269" key="4">
    <source>
    </source>
</evidence>
<evidence type="ECO:0000269" key="5">
    <source>
    </source>
</evidence>
<evidence type="ECO:0000269" key="6">
    <source>
    </source>
</evidence>
<evidence type="ECO:0000305" key="7"/>
<evidence type="ECO:0000305" key="8">
    <source>
    </source>
</evidence>
<evidence type="ECO:0007829" key="9">
    <source>
        <dbReference type="PDB" id="4JE6"/>
    </source>
</evidence>
<gene>
    <name type="primary">PDF1A</name>
    <name type="synonym">DEF1</name>
    <name type="ordered locus">At1g15390</name>
    <name type="ORF">F9L1.34</name>
    <name type="ORF">F9L1_34</name>
</gene>
<comment type="function">
    <text evidence="2 3 4">Removes the formyl group from the N-terminal Met of newly synthesized proteins.</text>
</comment>
<comment type="catalytic activity">
    <reaction evidence="3 4">
        <text>N-terminal N-formyl-L-methionyl-[peptide] + H2O = N-terminal L-methionyl-[peptide] + formate</text>
        <dbReference type="Rhea" id="RHEA:24420"/>
        <dbReference type="Rhea" id="RHEA-COMP:10639"/>
        <dbReference type="Rhea" id="RHEA-COMP:10640"/>
        <dbReference type="ChEBI" id="CHEBI:15377"/>
        <dbReference type="ChEBI" id="CHEBI:15740"/>
        <dbReference type="ChEBI" id="CHEBI:49298"/>
        <dbReference type="ChEBI" id="CHEBI:64731"/>
        <dbReference type="EC" id="3.5.1.88"/>
    </reaction>
    <physiologicalReaction direction="left-to-right" evidence="8">
        <dbReference type="Rhea" id="RHEA:24421"/>
    </physiologicalReaction>
</comment>
<comment type="cofactor">
    <cofactor evidence="4">
        <name>Zn(2+)</name>
        <dbReference type="ChEBI" id="CHEBI:29105"/>
    </cofactor>
    <text evidence="4">Binds 1 Zn(2+) ion per subunit.</text>
</comment>
<comment type="activity regulation">
    <text evidence="3 4">Inhibited by actinonin.</text>
</comment>
<comment type="biophysicochemical properties">
    <kinetics>
        <KM evidence="3">240 uM for N-formyl-Met-Leu-rho-nitroanilide</KM>
        <KM evidence="3">710 uM for N-formyl-Met-Ala-Ser</KM>
        <Vmax evidence="3">0.11 umol/min/mg enzyme toward N-formyl-Met-Leu-rho-nitroanilide</Vmax>
        <Vmax evidence="3">0.2 umol/min/mg enzyme toward N-formyl-Met-Ala-Ser</Vmax>
    </kinetics>
</comment>
<comment type="subunit">
    <text evidence="6">Homodimer.</text>
</comment>
<comment type="subcellular location">
    <subcellularLocation>
        <location>Plastid</location>
        <location>Chloroplast stroma</location>
    </subcellularLocation>
    <subcellularLocation>
        <location>Mitochondrion</location>
    </subcellularLocation>
    <text evidence="2 3">Reported to be localized to mitochondria, based on transient GFP expression in a heterologous system (PubMed:11060042), but also shown to be imported and correctly processed in isolated chloroplast (PubMed:11553738).</text>
</comment>
<comment type="tissue specificity">
    <text evidence="2">Expressed in roots, leaves, flowers and siliques.</text>
</comment>
<comment type="disruption phenotype">
    <text evidence="5">No visible phenotype.</text>
</comment>
<comment type="similarity">
    <text evidence="7">Belongs to the polypeptide deformylase family.</text>
</comment>
<comment type="sequence caution" evidence="7">
    <conflict type="erroneous initiation">
        <sequence resource="EMBL-CDS" id="AAD39667"/>
    </conflict>
    <text>Truncated N-terminus.</text>
</comment>
<comment type="sequence caution" evidence="7">
    <conflict type="erroneous initiation">
        <sequence resource="EMBL-CDS" id="AAK32873"/>
    </conflict>
    <text>Truncated N-terminus.</text>
</comment>
<accession>Q9FV53</accession>
<accession>Q9XI30</accession>
<keyword id="KW-0002">3D-structure</keyword>
<keyword id="KW-0150">Chloroplast</keyword>
<keyword id="KW-0378">Hydrolase</keyword>
<keyword id="KW-0479">Metal-binding</keyword>
<keyword id="KW-0496">Mitochondrion</keyword>
<keyword id="KW-0934">Plastid</keyword>
<keyword id="KW-0648">Protein biosynthesis</keyword>
<keyword id="KW-1185">Reference proteome</keyword>
<keyword id="KW-0809">Transit peptide</keyword>
<keyword id="KW-0862">Zinc</keyword>
<organism>
    <name type="scientific">Arabidopsis thaliana</name>
    <name type="common">Mouse-ear cress</name>
    <dbReference type="NCBI Taxonomy" id="3702"/>
    <lineage>
        <taxon>Eukaryota</taxon>
        <taxon>Viridiplantae</taxon>
        <taxon>Streptophyta</taxon>
        <taxon>Embryophyta</taxon>
        <taxon>Tracheophyta</taxon>
        <taxon>Spermatophyta</taxon>
        <taxon>Magnoliopsida</taxon>
        <taxon>eudicotyledons</taxon>
        <taxon>Gunneridae</taxon>
        <taxon>Pentapetalae</taxon>
        <taxon>rosids</taxon>
        <taxon>malvids</taxon>
        <taxon>Brassicales</taxon>
        <taxon>Brassicaceae</taxon>
        <taxon>Camelineae</taxon>
        <taxon>Arabidopsis</taxon>
    </lineage>
</organism>
<reference key="1">
    <citation type="journal article" date="2000" name="EMBO J.">
        <title>Identification of eukaryotic peptide deformylases reveals universality of N-terminal protein processing mechanisms.</title>
        <authorList>
            <person name="Giglione C."/>
            <person name="Serero A."/>
            <person name="Pierre M."/>
            <person name="Boisson B."/>
            <person name="Meinnel T."/>
        </authorList>
    </citation>
    <scope>NUCLEOTIDE SEQUENCE [MRNA]</scope>
    <scope>FUNCTION</scope>
    <scope>TISSUE SPECIFICITY</scope>
    <scope>SUBCELLULAR LOCATION</scope>
</reference>
<reference key="2">
    <citation type="journal article" date="2000" name="Nature">
        <title>Sequence and analysis of chromosome 1 of the plant Arabidopsis thaliana.</title>
        <authorList>
            <person name="Theologis A."/>
            <person name="Ecker J.R."/>
            <person name="Palm C.J."/>
            <person name="Federspiel N.A."/>
            <person name="Kaul S."/>
            <person name="White O."/>
            <person name="Alonso J."/>
            <person name="Altafi H."/>
            <person name="Araujo R."/>
            <person name="Bowman C.L."/>
            <person name="Brooks S.Y."/>
            <person name="Buehler E."/>
            <person name="Chan A."/>
            <person name="Chao Q."/>
            <person name="Chen H."/>
            <person name="Cheuk R.F."/>
            <person name="Chin C.W."/>
            <person name="Chung M.K."/>
            <person name="Conn L."/>
            <person name="Conway A.B."/>
            <person name="Conway A.R."/>
            <person name="Creasy T.H."/>
            <person name="Dewar K."/>
            <person name="Dunn P."/>
            <person name="Etgu P."/>
            <person name="Feldblyum T.V."/>
            <person name="Feng J.-D."/>
            <person name="Fong B."/>
            <person name="Fujii C.Y."/>
            <person name="Gill J.E."/>
            <person name="Goldsmith A.D."/>
            <person name="Haas B."/>
            <person name="Hansen N.F."/>
            <person name="Hughes B."/>
            <person name="Huizar L."/>
            <person name="Hunter J.L."/>
            <person name="Jenkins J."/>
            <person name="Johnson-Hopson C."/>
            <person name="Khan S."/>
            <person name="Khaykin E."/>
            <person name="Kim C.J."/>
            <person name="Koo H.L."/>
            <person name="Kremenetskaia I."/>
            <person name="Kurtz D.B."/>
            <person name="Kwan A."/>
            <person name="Lam B."/>
            <person name="Langin-Hooper S."/>
            <person name="Lee A."/>
            <person name="Lee J.M."/>
            <person name="Lenz C.A."/>
            <person name="Li J.H."/>
            <person name="Li Y.-P."/>
            <person name="Lin X."/>
            <person name="Liu S.X."/>
            <person name="Liu Z.A."/>
            <person name="Luros J.S."/>
            <person name="Maiti R."/>
            <person name="Marziali A."/>
            <person name="Militscher J."/>
            <person name="Miranda M."/>
            <person name="Nguyen M."/>
            <person name="Nierman W.C."/>
            <person name="Osborne B.I."/>
            <person name="Pai G."/>
            <person name="Peterson J."/>
            <person name="Pham P.K."/>
            <person name="Rizzo M."/>
            <person name="Rooney T."/>
            <person name="Rowley D."/>
            <person name="Sakano H."/>
            <person name="Salzberg S.L."/>
            <person name="Schwartz J.R."/>
            <person name="Shinn P."/>
            <person name="Southwick A.M."/>
            <person name="Sun H."/>
            <person name="Tallon L.J."/>
            <person name="Tambunga G."/>
            <person name="Toriumi M.J."/>
            <person name="Town C.D."/>
            <person name="Utterback T."/>
            <person name="Van Aken S."/>
            <person name="Vaysberg M."/>
            <person name="Vysotskaia V.S."/>
            <person name="Walker M."/>
            <person name="Wu D."/>
            <person name="Yu G."/>
            <person name="Fraser C.M."/>
            <person name="Venter J.C."/>
            <person name="Davis R.W."/>
        </authorList>
    </citation>
    <scope>NUCLEOTIDE SEQUENCE [LARGE SCALE GENOMIC DNA]</scope>
    <source>
        <strain>cv. Columbia</strain>
    </source>
</reference>
<reference key="3">
    <citation type="journal article" date="2017" name="Plant J.">
        <title>Araport11: a complete reannotation of the Arabidopsis thaliana reference genome.</title>
        <authorList>
            <person name="Cheng C.Y."/>
            <person name="Krishnakumar V."/>
            <person name="Chan A.P."/>
            <person name="Thibaud-Nissen F."/>
            <person name="Schobel S."/>
            <person name="Town C.D."/>
        </authorList>
    </citation>
    <scope>GENOME REANNOTATION</scope>
    <source>
        <strain>cv. Columbia</strain>
    </source>
</reference>
<reference key="4">
    <citation type="journal article" date="2003" name="Science">
        <title>Empirical analysis of transcriptional activity in the Arabidopsis genome.</title>
        <authorList>
            <person name="Yamada K."/>
            <person name="Lim J."/>
            <person name="Dale J.M."/>
            <person name="Chen H."/>
            <person name="Shinn P."/>
            <person name="Palm C.J."/>
            <person name="Southwick A.M."/>
            <person name="Wu H.C."/>
            <person name="Kim C.J."/>
            <person name="Nguyen M."/>
            <person name="Pham P.K."/>
            <person name="Cheuk R.F."/>
            <person name="Karlin-Newmann G."/>
            <person name="Liu S.X."/>
            <person name="Lam B."/>
            <person name="Sakano H."/>
            <person name="Wu T."/>
            <person name="Yu G."/>
            <person name="Miranda M."/>
            <person name="Quach H.L."/>
            <person name="Tripp M."/>
            <person name="Chang C.H."/>
            <person name="Lee J.M."/>
            <person name="Toriumi M.J."/>
            <person name="Chan M.M."/>
            <person name="Tang C.C."/>
            <person name="Onodera C.S."/>
            <person name="Deng J.M."/>
            <person name="Akiyama K."/>
            <person name="Ansari Y."/>
            <person name="Arakawa T."/>
            <person name="Banh J."/>
            <person name="Banno F."/>
            <person name="Bowser L."/>
            <person name="Brooks S.Y."/>
            <person name="Carninci P."/>
            <person name="Chao Q."/>
            <person name="Choy N."/>
            <person name="Enju A."/>
            <person name="Goldsmith A.D."/>
            <person name="Gurjal M."/>
            <person name="Hansen N.F."/>
            <person name="Hayashizaki Y."/>
            <person name="Johnson-Hopson C."/>
            <person name="Hsuan V.W."/>
            <person name="Iida K."/>
            <person name="Karnes M."/>
            <person name="Khan S."/>
            <person name="Koesema E."/>
            <person name="Ishida J."/>
            <person name="Jiang P.X."/>
            <person name="Jones T."/>
            <person name="Kawai J."/>
            <person name="Kamiya A."/>
            <person name="Meyers C."/>
            <person name="Nakajima M."/>
            <person name="Narusaka M."/>
            <person name="Seki M."/>
            <person name="Sakurai T."/>
            <person name="Satou M."/>
            <person name="Tamse R."/>
            <person name="Vaysberg M."/>
            <person name="Wallender E.K."/>
            <person name="Wong C."/>
            <person name="Yamamura Y."/>
            <person name="Yuan S."/>
            <person name="Shinozaki K."/>
            <person name="Davis R.W."/>
            <person name="Theologis A."/>
            <person name="Ecker J.R."/>
        </authorList>
    </citation>
    <scope>NUCLEOTIDE SEQUENCE [LARGE SCALE MRNA] OF 6-269</scope>
    <source>
        <strain>cv. Columbia</strain>
    </source>
</reference>
<reference key="5">
    <citation type="journal article" date="2001" name="Plant Physiol.">
        <title>Eukaryotic peptide deformylases. Nuclear-encoded and chloroplast-targeted enzymes in Arabidopsis.</title>
        <authorList>
            <person name="Dirk L.M."/>
            <person name="Williams M.A."/>
            <person name="Houtz R.L."/>
        </authorList>
    </citation>
    <scope>SUBCELLULAR LOCATION</scope>
    <scope>ACTIVITY REGULATION</scope>
    <scope>BIOPHYSICOCHEMICAL PROPERTIES</scope>
    <scope>FUNCTION</scope>
    <scope>CATALYTIC ACTIVITY</scope>
</reference>
<reference key="6">
    <citation type="journal article" date="2001" name="J. Mol. Biol.">
        <title>Distinctive features of the two classes of eukaryotic peptide deformylases.</title>
        <authorList>
            <person name="Serero A."/>
            <person name="Giglione C."/>
            <person name="Meinnel T."/>
        </authorList>
    </citation>
    <scope>COFACTOR</scope>
    <scope>ACTIVITY REGULATION</scope>
</reference>
<reference key="7">
    <citation type="journal article" date="2003" name="EMBO J.">
        <title>Control of protein life-span by N-terminal methionine excision.</title>
        <authorList>
            <person name="Giglione C."/>
            <person name="Vallon O."/>
            <person name="Meinnel T."/>
        </authorList>
    </citation>
    <scope>DISRUPTION PHENOTYPE</scope>
</reference>
<reference key="8">
    <citation type="journal article" date="2005" name="J. Biol. Chem.">
        <title>The crystal structure of mitochondrial (Type 1A) peptide deformylase provides clear guidelines for the design of inhibitors specific for the bacterial forms.</title>
        <authorList>
            <person name="Fieulaine S."/>
            <person name="Juillan-Binard C."/>
            <person name="Serero A."/>
            <person name="Dardel F."/>
            <person name="Giglione C."/>
            <person name="Meinnel T."/>
            <person name="Ferrer J.-L."/>
        </authorList>
    </citation>
    <scope>X-RAY CRYSTALLOGRAPHY (2.8 ANGSTROMS) OF 79-267 IN COMPLEX WITH ZINC IONS AND SUBSTRATE</scope>
    <scope>HOMODIMERIZATION</scope>
    <scope>FUNCTION</scope>
    <scope>CATALYTIC ACTIVITY</scope>
</reference>
<dbReference type="EC" id="3.5.1.88" evidence="3 4"/>
<dbReference type="EMBL" id="AF250959">
    <property type="protein sequence ID" value="AAG33973.1"/>
    <property type="molecule type" value="mRNA"/>
</dbReference>
<dbReference type="EMBL" id="AC007591">
    <property type="protein sequence ID" value="AAD39667.1"/>
    <property type="status" value="ALT_INIT"/>
    <property type="molecule type" value="Genomic_DNA"/>
</dbReference>
<dbReference type="EMBL" id="CP002684">
    <property type="protein sequence ID" value="AEE29315.1"/>
    <property type="molecule type" value="Genomic_DNA"/>
</dbReference>
<dbReference type="EMBL" id="AF361861">
    <property type="protein sequence ID" value="AAK32873.1"/>
    <property type="status" value="ALT_INIT"/>
    <property type="molecule type" value="mRNA"/>
</dbReference>
<dbReference type="EMBL" id="AY129485">
    <property type="protein sequence ID" value="AAM91071.1"/>
    <property type="molecule type" value="mRNA"/>
</dbReference>
<dbReference type="PIR" id="E86288">
    <property type="entry name" value="E86288"/>
</dbReference>
<dbReference type="RefSeq" id="NP_563974.1">
    <property type="nucleotide sequence ID" value="NM_101408.3"/>
</dbReference>
<dbReference type="PDB" id="1ZXZ">
    <property type="method" value="X-ray"/>
    <property type="resolution" value="2.80 A"/>
    <property type="chains" value="A/B=79-267"/>
</dbReference>
<dbReference type="PDB" id="1ZY0">
    <property type="method" value="X-ray"/>
    <property type="resolution" value="2.90 A"/>
    <property type="chains" value="A/B=79-267"/>
</dbReference>
<dbReference type="PDB" id="1ZY1">
    <property type="method" value="X-ray"/>
    <property type="resolution" value="3.00 A"/>
    <property type="chains" value="A/B=79-267"/>
</dbReference>
<dbReference type="PDB" id="4JE6">
    <property type="method" value="X-ray"/>
    <property type="resolution" value="2.00 A"/>
    <property type="chains" value="A/B=79-267"/>
</dbReference>
<dbReference type="PDB" id="4JE7">
    <property type="method" value="X-ray"/>
    <property type="resolution" value="2.10 A"/>
    <property type="chains" value="A/B=79-267"/>
</dbReference>
<dbReference type="PDB" id="4JE8">
    <property type="method" value="X-ray"/>
    <property type="resolution" value="2.40 A"/>
    <property type="chains" value="A/B=79-267"/>
</dbReference>
<dbReference type="PDBsum" id="1ZXZ"/>
<dbReference type="PDBsum" id="1ZY0"/>
<dbReference type="PDBsum" id="1ZY1"/>
<dbReference type="PDBsum" id="4JE6"/>
<dbReference type="PDBsum" id="4JE7"/>
<dbReference type="PDBsum" id="4JE8"/>
<dbReference type="SMR" id="Q9FV53"/>
<dbReference type="BioGRID" id="23349">
    <property type="interactions" value="1"/>
</dbReference>
<dbReference type="FunCoup" id="Q9FV53">
    <property type="interactions" value="681"/>
</dbReference>
<dbReference type="STRING" id="3702.Q9FV53"/>
<dbReference type="BindingDB" id="Q9FV53"/>
<dbReference type="ChEMBL" id="CHEMBL1075041"/>
<dbReference type="PaxDb" id="3702-AT1G15390.1"/>
<dbReference type="ProteomicsDB" id="224596"/>
<dbReference type="EnsemblPlants" id="AT1G15390.1">
    <property type="protein sequence ID" value="AT1G15390.1"/>
    <property type="gene ID" value="AT1G15390"/>
</dbReference>
<dbReference type="GeneID" id="838109"/>
<dbReference type="Gramene" id="AT1G15390.1">
    <property type="protein sequence ID" value="AT1G15390.1"/>
    <property type="gene ID" value="AT1G15390"/>
</dbReference>
<dbReference type="KEGG" id="ath:AT1G15390"/>
<dbReference type="Araport" id="AT1G15390"/>
<dbReference type="TAIR" id="AT1G15390">
    <property type="gene designation" value="PDF1A"/>
</dbReference>
<dbReference type="eggNOG" id="KOG3137">
    <property type="taxonomic scope" value="Eukaryota"/>
</dbReference>
<dbReference type="HOGENOM" id="CLU_061901_5_0_1"/>
<dbReference type="InParanoid" id="Q9FV53"/>
<dbReference type="OMA" id="HLYYDHI"/>
<dbReference type="OrthoDB" id="276063at2759"/>
<dbReference type="BRENDA" id="3.5.1.88">
    <property type="organism ID" value="399"/>
</dbReference>
<dbReference type="SABIO-RK" id="Q9FV53"/>
<dbReference type="CD-CODE" id="4299E36E">
    <property type="entry name" value="Nucleolus"/>
</dbReference>
<dbReference type="EvolutionaryTrace" id="Q9FV53"/>
<dbReference type="PRO" id="PR:Q9FV53"/>
<dbReference type="Proteomes" id="UP000006548">
    <property type="component" value="Chromosome 1"/>
</dbReference>
<dbReference type="ExpressionAtlas" id="Q9FV53">
    <property type="expression patterns" value="baseline and differential"/>
</dbReference>
<dbReference type="GO" id="GO:0009507">
    <property type="term" value="C:chloroplast"/>
    <property type="evidence" value="ECO:0007005"/>
    <property type="project" value="TAIR"/>
</dbReference>
<dbReference type="GO" id="GO:0009570">
    <property type="term" value="C:chloroplast stroma"/>
    <property type="evidence" value="ECO:0007669"/>
    <property type="project" value="UniProtKB-SubCell"/>
</dbReference>
<dbReference type="GO" id="GO:0005739">
    <property type="term" value="C:mitochondrion"/>
    <property type="evidence" value="ECO:0000314"/>
    <property type="project" value="TAIR"/>
</dbReference>
<dbReference type="GO" id="GO:0009505">
    <property type="term" value="C:plant-type cell wall"/>
    <property type="evidence" value="ECO:0007005"/>
    <property type="project" value="TAIR"/>
</dbReference>
<dbReference type="GO" id="GO:0046872">
    <property type="term" value="F:metal ion binding"/>
    <property type="evidence" value="ECO:0007669"/>
    <property type="project" value="UniProtKB-KW"/>
</dbReference>
<dbReference type="GO" id="GO:0042586">
    <property type="term" value="F:peptide deformylase activity"/>
    <property type="evidence" value="ECO:0000314"/>
    <property type="project" value="TAIR"/>
</dbReference>
<dbReference type="GO" id="GO:0043686">
    <property type="term" value="P:co-translational protein modification"/>
    <property type="evidence" value="ECO:0000314"/>
    <property type="project" value="TAIR"/>
</dbReference>
<dbReference type="GO" id="GO:0006412">
    <property type="term" value="P:translation"/>
    <property type="evidence" value="ECO:0007669"/>
    <property type="project" value="UniProtKB-KW"/>
</dbReference>
<dbReference type="CDD" id="cd00487">
    <property type="entry name" value="Pep_deformylase"/>
    <property type="match status" value="1"/>
</dbReference>
<dbReference type="FunFam" id="3.90.45.10:FF:000003">
    <property type="entry name" value="Peptide deformylase"/>
    <property type="match status" value="1"/>
</dbReference>
<dbReference type="Gene3D" id="3.90.45.10">
    <property type="entry name" value="Peptide deformylase"/>
    <property type="match status" value="1"/>
</dbReference>
<dbReference type="HAMAP" id="MF_00163">
    <property type="entry name" value="Pep_deformylase"/>
    <property type="match status" value="1"/>
</dbReference>
<dbReference type="InterPro" id="IPR023635">
    <property type="entry name" value="Peptide_deformylase"/>
</dbReference>
<dbReference type="InterPro" id="IPR036821">
    <property type="entry name" value="Peptide_deformylase_sf"/>
</dbReference>
<dbReference type="NCBIfam" id="TIGR00079">
    <property type="entry name" value="pept_deformyl"/>
    <property type="match status" value="1"/>
</dbReference>
<dbReference type="NCBIfam" id="NF001159">
    <property type="entry name" value="PRK00150.1-3"/>
    <property type="match status" value="1"/>
</dbReference>
<dbReference type="PANTHER" id="PTHR10458">
    <property type="entry name" value="PEPTIDE DEFORMYLASE"/>
    <property type="match status" value="1"/>
</dbReference>
<dbReference type="PANTHER" id="PTHR10458:SF2">
    <property type="entry name" value="PEPTIDE DEFORMYLASE, MITOCHONDRIAL"/>
    <property type="match status" value="1"/>
</dbReference>
<dbReference type="Pfam" id="PF01327">
    <property type="entry name" value="Pep_deformylase"/>
    <property type="match status" value="1"/>
</dbReference>
<dbReference type="PRINTS" id="PR01576">
    <property type="entry name" value="PDEFORMYLASE"/>
</dbReference>
<dbReference type="SUPFAM" id="SSF56420">
    <property type="entry name" value="Peptide deformylase"/>
    <property type="match status" value="1"/>
</dbReference>
<name>DEF1A_ARATH</name>
<sequence>MGLHRDEATAMETLFRVSLRLLPVSAAVTCRSIRFPVSRPGSSHLLNRKLYNLPTSSSSSLSTKAGWLLGLGEKKKKVDLPEIVASGDPVLHEKAREVDPGEIGSERIQKIIDDMIKVMRLAPGVGLAAPQIGVPLRIIVLEDTKEYISYAPKEEILAQERRHFDLMVMVNPVLKERSNKKALFFEGCLSVDGFRAAVERYLEVVVTGYDRQGKRIEVNASGWQARILQHECDHLDGNLYVDKMVPRTFRTVDNLDLPLAEGCPKLGPQ</sequence>
<proteinExistence type="evidence at protein level"/>
<protein>
    <recommendedName>
        <fullName>Peptide deformylase 1A, chloroplastic/mitochondrial</fullName>
        <shortName>AtDEF1</shortName>
        <shortName>AtPDF1A</shortName>
        <shortName>PDF 1A</shortName>
        <ecNumber evidence="3 4">3.5.1.88</ecNumber>
    </recommendedName>
    <alternativeName>
        <fullName>Polypeptide deformylase</fullName>
    </alternativeName>
</protein>
<feature type="transit peptide" description="Chloroplast and mitochondrion" evidence="1">
    <location>
        <begin position="1"/>
        <end position="60"/>
    </location>
</feature>
<feature type="chain" id="PRO_0000006730" description="Peptide deformylase 1A, chloroplastic/mitochondrial">
    <location>
        <begin position="61"/>
        <end position="269"/>
    </location>
</feature>
<feature type="region of interest" description="Dimerization">
    <location>
        <begin position="191"/>
        <end position="196"/>
    </location>
</feature>
<feature type="region of interest" description="Dimerization">
    <location>
        <begin position="236"/>
        <end position="254"/>
    </location>
</feature>
<feature type="active site">
    <location>
        <position position="231"/>
    </location>
</feature>
<feature type="binding site">
    <location>
        <begin position="123"/>
        <end position="126"/>
    </location>
    <ligand>
        <name>substrate</name>
    </ligand>
</feature>
<feature type="binding site" evidence="6">
    <location>
        <position position="187"/>
    </location>
    <ligand>
        <name>substrate</name>
    </ligand>
</feature>
<feature type="binding site">
    <location>
        <position position="188"/>
    </location>
    <ligand>
        <name>Zn(2+)</name>
        <dbReference type="ChEBI" id="CHEBI:29105"/>
    </ligand>
</feature>
<feature type="binding site">
    <location>
        <position position="230"/>
    </location>
    <ligand>
        <name>Zn(2+)</name>
        <dbReference type="ChEBI" id="CHEBI:29105"/>
    </ligand>
</feature>
<feature type="binding site">
    <location>
        <position position="234"/>
    </location>
    <ligand>
        <name>Zn(2+)</name>
        <dbReference type="ChEBI" id="CHEBI:29105"/>
    </ligand>
</feature>
<feature type="helix" evidence="9">
    <location>
        <begin position="89"/>
        <end position="91"/>
    </location>
</feature>
<feature type="helix" evidence="9">
    <location>
        <begin position="100"/>
        <end position="102"/>
    </location>
</feature>
<feature type="helix" evidence="9">
    <location>
        <begin position="106"/>
        <end position="121"/>
    </location>
</feature>
<feature type="strand" evidence="9">
    <location>
        <begin position="125"/>
        <end position="128"/>
    </location>
</feature>
<feature type="helix" evidence="9">
    <location>
        <begin position="129"/>
        <end position="132"/>
    </location>
</feature>
<feature type="strand" evidence="9">
    <location>
        <begin position="138"/>
        <end position="143"/>
    </location>
</feature>
<feature type="helix" evidence="9">
    <location>
        <begin position="145"/>
        <end position="148"/>
    </location>
</feature>
<feature type="helix" evidence="9">
    <location>
        <begin position="153"/>
        <end position="159"/>
    </location>
</feature>
<feature type="strand" evidence="9">
    <location>
        <begin position="164"/>
        <end position="179"/>
    </location>
</feature>
<feature type="strand" evidence="9">
    <location>
        <begin position="181"/>
        <end position="188"/>
    </location>
</feature>
<feature type="strand" evidence="9">
    <location>
        <begin position="191"/>
        <end position="209"/>
    </location>
</feature>
<feature type="strand" evidence="9">
    <location>
        <begin position="215"/>
        <end position="221"/>
    </location>
</feature>
<feature type="helix" evidence="9">
    <location>
        <begin position="222"/>
        <end position="235"/>
    </location>
</feature>
<feature type="helix" evidence="9">
    <location>
        <begin position="240"/>
        <end position="242"/>
    </location>
</feature>
<feature type="helix" evidence="9">
    <location>
        <begin position="252"/>
        <end position="254"/>
    </location>
</feature>